<sequence length="515" mass="57622">MAARLIGFFLFQAVSWAYGAQPCIPKSFGYSSVVCVCNASYCDSLDPVTLPALGTFSRYESTRRGRRMELSVGAIQANRTGTGLLLTLQPEKKFQKVKGFGGAMTDATALNILALSPPTQKLLLRSYFSTNGIEYNIIRVPMASCDFSIRVYTYADTPNDFQLSNFSLPEEDTKLKIPLIHQALKMSSRPISLFASPWTSPTWLKTNGRVNGKGSLKGQPGDIFHQTWANYFVKFLDAYAKYGLRFWAVTAENEPTAGLFTGYPFQCLGFTPEHQRDFISRDLGPALANSSHDVKLLMLDDQRLLLPRWAEVVLSDPEAAKYVHGIAVHWYMDFLAPAKATLGETHRLFPNTMLFASEACVGSKFWEQSVRLGSWDRGMQYSHSIITNLLYHVTGWTDWNLALNPEGGPNWVRNFVDSPIIVDIPKDAFYKQPMFYHLGHFSKFIPEGSQRVALVASESTDLETVALLRPDGSAVVVVLNRSSEDVPLTISDPDLGFLETVSPGYSIHTYLWRRQ</sequence>
<accession>P17439</accession>
<accession>Q78NR7</accession>
<reference key="1">
    <citation type="journal article" date="1989" name="Proc. Natl. Acad. Sci. U.S.A.">
        <title>Comparison of the chromosomal localization of murine and human glucocerebrosidase genes and of the deduced amino acid sequences.</title>
        <authorList>
            <person name="O'Neill R.R."/>
            <person name="Tokoru T."/>
            <person name="Kozak C.A."/>
            <person name="Brady R.O."/>
        </authorList>
    </citation>
    <scope>NUCLEOTIDE SEQUENCE [MRNA]</scope>
</reference>
<reference key="2">
    <citation type="submission" date="2002-05" db="EMBL/GenBank/DDBJ databases">
        <title>Comparative sequence analysis of the mouse and human GBA locus.</title>
        <authorList>
            <person name="Sinclair G."/>
            <person name="Wilson M.D."/>
            <person name="McKinnel L."/>
            <person name="Koop B.F."/>
            <person name="Choy F.Y.M."/>
        </authorList>
    </citation>
    <scope>NUCLEOTIDE SEQUENCE [GENOMIC DNA]</scope>
    <source>
        <strain>129/SvJ</strain>
    </source>
</reference>
<reference key="3">
    <citation type="journal article" date="2005" name="Science">
        <title>The transcriptional landscape of the mammalian genome.</title>
        <authorList>
            <person name="Carninci P."/>
            <person name="Kasukawa T."/>
            <person name="Katayama S."/>
            <person name="Gough J."/>
            <person name="Frith M.C."/>
            <person name="Maeda N."/>
            <person name="Oyama R."/>
            <person name="Ravasi T."/>
            <person name="Lenhard B."/>
            <person name="Wells C."/>
            <person name="Kodzius R."/>
            <person name="Shimokawa K."/>
            <person name="Bajic V.B."/>
            <person name="Brenner S.E."/>
            <person name="Batalov S."/>
            <person name="Forrest A.R."/>
            <person name="Zavolan M."/>
            <person name="Davis M.J."/>
            <person name="Wilming L.G."/>
            <person name="Aidinis V."/>
            <person name="Allen J.E."/>
            <person name="Ambesi-Impiombato A."/>
            <person name="Apweiler R."/>
            <person name="Aturaliya R.N."/>
            <person name="Bailey T.L."/>
            <person name="Bansal M."/>
            <person name="Baxter L."/>
            <person name="Beisel K.W."/>
            <person name="Bersano T."/>
            <person name="Bono H."/>
            <person name="Chalk A.M."/>
            <person name="Chiu K.P."/>
            <person name="Choudhary V."/>
            <person name="Christoffels A."/>
            <person name="Clutterbuck D.R."/>
            <person name="Crowe M.L."/>
            <person name="Dalla E."/>
            <person name="Dalrymple B.P."/>
            <person name="de Bono B."/>
            <person name="Della Gatta G."/>
            <person name="di Bernardo D."/>
            <person name="Down T."/>
            <person name="Engstrom P."/>
            <person name="Fagiolini M."/>
            <person name="Faulkner G."/>
            <person name="Fletcher C.F."/>
            <person name="Fukushima T."/>
            <person name="Furuno M."/>
            <person name="Futaki S."/>
            <person name="Gariboldi M."/>
            <person name="Georgii-Hemming P."/>
            <person name="Gingeras T.R."/>
            <person name="Gojobori T."/>
            <person name="Green R.E."/>
            <person name="Gustincich S."/>
            <person name="Harbers M."/>
            <person name="Hayashi Y."/>
            <person name="Hensch T.K."/>
            <person name="Hirokawa N."/>
            <person name="Hill D."/>
            <person name="Huminiecki L."/>
            <person name="Iacono M."/>
            <person name="Ikeo K."/>
            <person name="Iwama A."/>
            <person name="Ishikawa T."/>
            <person name="Jakt M."/>
            <person name="Kanapin A."/>
            <person name="Katoh M."/>
            <person name="Kawasawa Y."/>
            <person name="Kelso J."/>
            <person name="Kitamura H."/>
            <person name="Kitano H."/>
            <person name="Kollias G."/>
            <person name="Krishnan S.P."/>
            <person name="Kruger A."/>
            <person name="Kummerfeld S.K."/>
            <person name="Kurochkin I.V."/>
            <person name="Lareau L.F."/>
            <person name="Lazarevic D."/>
            <person name="Lipovich L."/>
            <person name="Liu J."/>
            <person name="Liuni S."/>
            <person name="McWilliam S."/>
            <person name="Madan Babu M."/>
            <person name="Madera M."/>
            <person name="Marchionni L."/>
            <person name="Matsuda H."/>
            <person name="Matsuzawa S."/>
            <person name="Miki H."/>
            <person name="Mignone F."/>
            <person name="Miyake S."/>
            <person name="Morris K."/>
            <person name="Mottagui-Tabar S."/>
            <person name="Mulder N."/>
            <person name="Nakano N."/>
            <person name="Nakauchi H."/>
            <person name="Ng P."/>
            <person name="Nilsson R."/>
            <person name="Nishiguchi S."/>
            <person name="Nishikawa S."/>
            <person name="Nori F."/>
            <person name="Ohara O."/>
            <person name="Okazaki Y."/>
            <person name="Orlando V."/>
            <person name="Pang K.C."/>
            <person name="Pavan W.J."/>
            <person name="Pavesi G."/>
            <person name="Pesole G."/>
            <person name="Petrovsky N."/>
            <person name="Piazza S."/>
            <person name="Reed J."/>
            <person name="Reid J.F."/>
            <person name="Ring B.Z."/>
            <person name="Ringwald M."/>
            <person name="Rost B."/>
            <person name="Ruan Y."/>
            <person name="Salzberg S.L."/>
            <person name="Sandelin A."/>
            <person name="Schneider C."/>
            <person name="Schoenbach C."/>
            <person name="Sekiguchi K."/>
            <person name="Semple C.A."/>
            <person name="Seno S."/>
            <person name="Sessa L."/>
            <person name="Sheng Y."/>
            <person name="Shibata Y."/>
            <person name="Shimada H."/>
            <person name="Shimada K."/>
            <person name="Silva D."/>
            <person name="Sinclair B."/>
            <person name="Sperling S."/>
            <person name="Stupka E."/>
            <person name="Sugiura K."/>
            <person name="Sultana R."/>
            <person name="Takenaka Y."/>
            <person name="Taki K."/>
            <person name="Tammoja K."/>
            <person name="Tan S.L."/>
            <person name="Tang S."/>
            <person name="Taylor M.S."/>
            <person name="Tegner J."/>
            <person name="Teichmann S.A."/>
            <person name="Ueda H.R."/>
            <person name="van Nimwegen E."/>
            <person name="Verardo R."/>
            <person name="Wei C.L."/>
            <person name="Yagi K."/>
            <person name="Yamanishi H."/>
            <person name="Zabarovsky E."/>
            <person name="Zhu S."/>
            <person name="Zimmer A."/>
            <person name="Hide W."/>
            <person name="Bult C."/>
            <person name="Grimmond S.M."/>
            <person name="Teasdale R.D."/>
            <person name="Liu E.T."/>
            <person name="Brusic V."/>
            <person name="Quackenbush J."/>
            <person name="Wahlestedt C."/>
            <person name="Mattick J.S."/>
            <person name="Hume D.A."/>
            <person name="Kai C."/>
            <person name="Sasaki D."/>
            <person name="Tomaru Y."/>
            <person name="Fukuda S."/>
            <person name="Kanamori-Katayama M."/>
            <person name="Suzuki M."/>
            <person name="Aoki J."/>
            <person name="Arakawa T."/>
            <person name="Iida J."/>
            <person name="Imamura K."/>
            <person name="Itoh M."/>
            <person name="Kato T."/>
            <person name="Kawaji H."/>
            <person name="Kawagashira N."/>
            <person name="Kawashima T."/>
            <person name="Kojima M."/>
            <person name="Kondo S."/>
            <person name="Konno H."/>
            <person name="Nakano K."/>
            <person name="Ninomiya N."/>
            <person name="Nishio T."/>
            <person name="Okada M."/>
            <person name="Plessy C."/>
            <person name="Shibata K."/>
            <person name="Shiraki T."/>
            <person name="Suzuki S."/>
            <person name="Tagami M."/>
            <person name="Waki K."/>
            <person name="Watahiki A."/>
            <person name="Okamura-Oho Y."/>
            <person name="Suzuki H."/>
            <person name="Kawai J."/>
            <person name="Hayashizaki Y."/>
        </authorList>
    </citation>
    <scope>NUCLEOTIDE SEQUENCE [LARGE SCALE MRNA]</scope>
    <source>
        <strain>C57BL/6J</strain>
    </source>
</reference>
<reference key="4">
    <citation type="journal article" date="2004" name="Genome Res.">
        <title>The status, quality, and expansion of the NIH full-length cDNA project: the Mammalian Gene Collection (MGC).</title>
        <authorList>
            <consortium name="The MGC Project Team"/>
        </authorList>
    </citation>
    <scope>NUCLEOTIDE SEQUENCE [LARGE SCALE MRNA]</scope>
    <source>
        <strain>FVB/N</strain>
        <tissue>Mammary gland</tissue>
    </source>
</reference>
<reference key="5">
    <citation type="journal article" date="1992" name="Biochem. Biophys. Res. Commun.">
        <title>Molecular and functional characterization of the murine glucocerebrosidase gene.</title>
        <authorList>
            <person name="Carstea E.D."/>
            <person name="Murray G.J."/>
            <person name="O'Neill R.R."/>
        </authorList>
    </citation>
    <scope>NUCLEOTIDE SEQUENCE [GENOMIC DNA] OF 1-18</scope>
    <source>
        <strain>BALB/cJ</strain>
    </source>
</reference>
<reference key="6">
    <citation type="submission" date="2009-01" db="UniProtKB">
        <authorList>
            <person name="Lubec G."/>
            <person name="Sunyer B."/>
            <person name="Chen W.-Q."/>
        </authorList>
    </citation>
    <scope>PROTEIN SEQUENCE OF 210-217</scope>
    <scope>IDENTIFICATION BY MASS SPECTROMETRY</scope>
    <source>
        <strain>OF1</strain>
        <tissue>Hippocampus</tissue>
    </source>
</reference>
<reference key="7">
    <citation type="journal article" date="1992" name="Nature">
        <title>Animal model of Gaucher's disease from targeted disruption of the mouse glucocerebrosidase gene.</title>
        <authorList>
            <person name="Tybulewicz V.L."/>
            <person name="Tremblay M.L."/>
            <person name="LaMarca M.E."/>
            <person name="Willemsen R."/>
            <person name="Stubblefield B.K."/>
            <person name="Winfield S."/>
            <person name="Zablocka B."/>
            <person name="Sidransky E."/>
            <person name="Martin B.M."/>
            <person name="Huang S.P."/>
        </authorList>
    </citation>
    <scope>CATALYTIC ACTIVITY</scope>
    <scope>DISRUPTION PHENOTYPE</scope>
</reference>
<reference key="8">
    <citation type="journal article" date="2005" name="Mol. Cell. Proteomics">
        <title>High throughput quantitative glycomics and glycoform-focused proteomics of murine dermis and epidermis.</title>
        <authorList>
            <person name="Uematsu R."/>
            <person name="Furukawa J."/>
            <person name="Nakagawa H."/>
            <person name="Shinohara Y."/>
            <person name="Deguchi K."/>
            <person name="Monde K."/>
            <person name="Nishimura S."/>
        </authorList>
    </citation>
    <scope>GLYCOSYLATION [LARGE SCALE ANALYSIS] AT ASN-165</scope>
    <source>
        <tissue>Epidermis</tissue>
    </source>
</reference>
<reference key="9">
    <citation type="journal article" date="2009" name="Nat. Biotechnol.">
        <title>Mass-spectrometric identification and relative quantification of N-linked cell surface glycoproteins.</title>
        <authorList>
            <person name="Wollscheid B."/>
            <person name="Bausch-Fluck D."/>
            <person name="Henderson C."/>
            <person name="O'Brien R."/>
            <person name="Bibel M."/>
            <person name="Schiess R."/>
            <person name="Aebersold R."/>
            <person name="Watts J.D."/>
        </authorList>
    </citation>
    <scope>GLYCOSYLATION [LARGE SCALE ANALYSIS] AT ASN-289</scope>
</reference>
<reference key="10">
    <citation type="journal article" date="2010" name="Cell">
        <title>A tissue-specific atlas of mouse protein phosphorylation and expression.</title>
        <authorList>
            <person name="Huttlin E.L."/>
            <person name="Jedrychowski M.P."/>
            <person name="Elias J.E."/>
            <person name="Goswami T."/>
            <person name="Rad R."/>
            <person name="Beausoleil S.A."/>
            <person name="Villen J."/>
            <person name="Haas W."/>
            <person name="Sowa M.E."/>
            <person name="Gygi S.P."/>
        </authorList>
    </citation>
    <scope>IDENTIFICATION BY MASS SPECTROMETRY [LARGE SCALE ANALYSIS]</scope>
    <source>
        <tissue>Brain</tissue>
        <tissue>Kidney</tissue>
        <tissue>Liver</tissue>
        <tissue>Lung</tissue>
        <tissue>Pancreas</tissue>
        <tissue>Spleen</tissue>
        <tissue>Testis</tissue>
    </source>
</reference>
<reference key="11">
    <citation type="journal article" date="2012" name="Proc. Natl. Acad. Sci. U.S.A.">
        <title>Gaucher disease gene GBA functions in immune regulation.</title>
        <authorList>
            <person name="Liu J."/>
            <person name="Halene S."/>
            <person name="Yang M."/>
            <person name="Iqbal J."/>
            <person name="Yang R."/>
            <person name="Mehal W.Z."/>
            <person name="Chuang W.L."/>
            <person name="Jain D."/>
            <person name="Yuen T."/>
            <person name="Sun L."/>
            <person name="Zaidi M."/>
            <person name="Mistry P.K."/>
        </authorList>
    </citation>
    <scope>DISRUPTION PHENOTYPE</scope>
</reference>
<reference key="12">
    <citation type="journal article" date="2013" name="Biochem. Biophys. Res. Commun.">
        <title>Cholesterol glucosylation is catalyzed by transglucosylation reaction of beta-glucosidase 1.</title>
        <authorList>
            <person name="Akiyama H."/>
            <person name="Kobayashi S."/>
            <person name="Hirabayashi Y."/>
            <person name="Murakami-Murofushi K."/>
        </authorList>
    </citation>
    <scope>FUNCTION</scope>
    <scope>CATALYTIC ACTIVITY</scope>
    <scope>PATHWAY</scope>
    <scope>ACTIVITY REGULATION</scope>
</reference>
<reference key="13">
    <citation type="journal article" date="2016" name="EBioMedicine">
        <title>Progranulin Recruits HSP70 to beta-Glucocerebrosidase and Is Therapeutic Against Gaucher Disease.</title>
        <authorList>
            <person name="Jian J."/>
            <person name="Tian Q.Y."/>
            <person name="Hettinghouse A."/>
            <person name="Zhao S."/>
            <person name="Liu H."/>
            <person name="Wei J."/>
            <person name="Grunig G."/>
            <person name="Zhang W."/>
            <person name="Setchell K.D.R."/>
            <person name="Sun Y."/>
            <person name="Overkleeft H.S."/>
            <person name="Chan G.L."/>
            <person name="Liu C.J."/>
        </authorList>
    </citation>
    <scope>INTERACTION WITH GRN</scope>
</reference>
<reference key="14">
    <citation type="journal article" date="2016" name="Hum. Mol. Genet.">
        <title>Autophagic lysosome reformation dysfunction in glucocerebrosidase deficient cells: relevance to Parkinson disease.</title>
        <authorList>
            <person name="Magalhaes J."/>
            <person name="Gegg M.E."/>
            <person name="Migdalska-Richards A."/>
            <person name="Doherty M.K."/>
            <person name="Whitfield P.D."/>
            <person name="Schapira A.H."/>
        </authorList>
    </citation>
    <scope>FUNCTION</scope>
</reference>
<feature type="signal peptide" evidence="1">
    <location>
        <begin position="1"/>
        <end position="19"/>
    </location>
</feature>
<feature type="chain" id="PRO_0000012178" description="Lysosomal acid glucosylceramidase">
    <location>
        <begin position="20"/>
        <end position="515"/>
    </location>
</feature>
<feature type="active site" description="Proton donor" evidence="1">
    <location>
        <position position="254"/>
    </location>
</feature>
<feature type="active site" description="Nucleophile" evidence="1">
    <location>
        <position position="358"/>
    </location>
</feature>
<feature type="glycosylation site" description="N-linked (GlcNAc...) asparagine" evidence="3">
    <location>
        <position position="38"/>
    </location>
</feature>
<feature type="glycosylation site" description="N-linked (GlcNAc...) asparagine" evidence="3">
    <location>
        <position position="78"/>
    </location>
</feature>
<feature type="glycosylation site" description="N-linked (GlcNAc...) (high mannose) asparagine" evidence="5">
    <location>
        <position position="165"/>
    </location>
</feature>
<feature type="glycosylation site" description="N-linked (GlcNAc...) asparagine" evidence="6">
    <location>
        <position position="289"/>
    </location>
</feature>
<feature type="glycosylation site" description="N-linked (GlcNAc...) asparagine" evidence="3">
    <location>
        <position position="480"/>
    </location>
</feature>
<feature type="disulfide bond" evidence="2">
    <location>
        <begin position="23"/>
        <end position="35"/>
    </location>
</feature>
<feature type="disulfide bond" evidence="2">
    <location>
        <begin position="37"/>
        <end position="42"/>
    </location>
</feature>
<protein>
    <recommendedName>
        <fullName evidence="12">Lysosomal acid glucosylceramidase</fullName>
        <shortName evidence="11">Lysosomal acid GCase</shortName>
        <ecNumber evidence="4 8">3.2.1.45</ecNumber>
    </recommendedName>
    <alternativeName>
        <fullName>Acid beta-glucosidase</fullName>
    </alternativeName>
    <alternativeName>
        <fullName>Beta-glucocerebrosidase</fullName>
    </alternativeName>
    <alternativeName>
        <fullName evidence="13">Cholesterol glucosyltransferase</fullName>
        <shortName evidence="11">SGTase</shortName>
        <ecNumber evidence="8">2.4.1.-</ecNumber>
    </alternativeName>
    <alternativeName>
        <fullName evidence="2">Cholesteryl-beta-glucosidase</fullName>
        <ecNumber evidence="2">3.2.1.-</ecNumber>
    </alternativeName>
    <alternativeName>
        <fullName>D-glucosyl-N-acylsphingosine glucohydrolase</fullName>
    </alternativeName>
    <alternativeName>
        <fullName evidence="12">Lysosomal cholesterol glycosyltransferase</fullName>
    </alternativeName>
    <alternativeName>
        <fullName evidence="12">Lysosomal galactosylceramidase</fullName>
        <ecNumber evidence="2">3.2.1.46</ecNumber>
    </alternativeName>
    <alternativeName>
        <fullName evidence="12">Lysosomal glycosylceramidase</fullName>
    </alternativeName>
</protein>
<organism>
    <name type="scientific">Mus musculus</name>
    <name type="common">Mouse</name>
    <dbReference type="NCBI Taxonomy" id="10090"/>
    <lineage>
        <taxon>Eukaryota</taxon>
        <taxon>Metazoa</taxon>
        <taxon>Chordata</taxon>
        <taxon>Craniata</taxon>
        <taxon>Vertebrata</taxon>
        <taxon>Euteleostomi</taxon>
        <taxon>Mammalia</taxon>
        <taxon>Eutheria</taxon>
        <taxon>Euarchontoglires</taxon>
        <taxon>Glires</taxon>
        <taxon>Rodentia</taxon>
        <taxon>Myomorpha</taxon>
        <taxon>Muroidea</taxon>
        <taxon>Muridae</taxon>
        <taxon>Murinae</taxon>
        <taxon>Mus</taxon>
        <taxon>Mus</taxon>
    </lineage>
</organism>
<gene>
    <name type="primary">Gba1</name>
    <name evidence="14" type="synonym">Gba</name>
</gene>
<keyword id="KW-0153">Cholesterol metabolism</keyword>
<keyword id="KW-0903">Direct protein sequencing</keyword>
<keyword id="KW-1015">Disulfide bond</keyword>
<keyword id="KW-0325">Glycoprotein</keyword>
<keyword id="KW-0326">Glycosidase</keyword>
<keyword id="KW-0328">Glycosyltransferase</keyword>
<keyword id="KW-0378">Hydrolase</keyword>
<keyword id="KW-0443">Lipid metabolism</keyword>
<keyword id="KW-0458">Lysosome</keyword>
<keyword id="KW-0472">Membrane</keyword>
<keyword id="KW-1185">Reference proteome</keyword>
<keyword id="KW-0732">Signal</keyword>
<keyword id="KW-0746">Sphingolipid metabolism</keyword>
<keyword id="KW-0753">Steroid metabolism</keyword>
<keyword id="KW-1207">Sterol metabolism</keyword>
<keyword id="KW-0808">Transferase</keyword>
<dbReference type="EC" id="3.2.1.45" evidence="4 8"/>
<dbReference type="EC" id="2.4.1.-" evidence="8"/>
<dbReference type="EC" id="3.2.1.-" evidence="2"/>
<dbReference type="EC" id="3.2.1.46" evidence="2"/>
<dbReference type="EMBL" id="M24119">
    <property type="protein sequence ID" value="AAA37671.1"/>
    <property type="molecule type" value="mRNA"/>
</dbReference>
<dbReference type="EMBL" id="AY115108">
    <property type="protein sequence ID" value="AAM66757.1"/>
    <property type="molecule type" value="Genomic_DNA"/>
</dbReference>
<dbReference type="EMBL" id="AK082767">
    <property type="protein sequence ID" value="BAC38609.1"/>
    <property type="molecule type" value="mRNA"/>
</dbReference>
<dbReference type="EMBL" id="BC006663">
    <property type="protein sequence ID" value="AAH06663.1"/>
    <property type="molecule type" value="mRNA"/>
</dbReference>
<dbReference type="EMBL" id="M89949">
    <property type="protein sequence ID" value="AAA37665.1"/>
    <property type="molecule type" value="Genomic_DNA"/>
</dbReference>
<dbReference type="CCDS" id="CCDS17493.1"/>
<dbReference type="PIR" id="A32931">
    <property type="entry name" value="A32931"/>
</dbReference>
<dbReference type="RefSeq" id="NP_001070879.1">
    <property type="nucleotide sequence ID" value="NM_001077411.4"/>
</dbReference>
<dbReference type="RefSeq" id="NP_001396887.1">
    <property type="nucleotide sequence ID" value="NM_001409958.1"/>
</dbReference>
<dbReference type="RefSeq" id="NP_001396888.1">
    <property type="nucleotide sequence ID" value="NM_001409959.1"/>
</dbReference>
<dbReference type="RefSeq" id="NP_032120.1">
    <property type="nucleotide sequence ID" value="NM_008094.7"/>
</dbReference>
<dbReference type="SMR" id="P17439"/>
<dbReference type="BioGRID" id="199844">
    <property type="interactions" value="11"/>
</dbReference>
<dbReference type="FunCoup" id="P17439">
    <property type="interactions" value="690"/>
</dbReference>
<dbReference type="IntAct" id="P17439">
    <property type="interactions" value="3"/>
</dbReference>
<dbReference type="STRING" id="10090.ENSMUSP00000130660"/>
<dbReference type="BindingDB" id="P17439"/>
<dbReference type="ChEMBL" id="CHEMBL2278"/>
<dbReference type="SwissLipids" id="SLP:000001930"/>
<dbReference type="CAZy" id="GH30">
    <property type="family name" value="Glycoside Hydrolase Family 30"/>
</dbReference>
<dbReference type="GlyConnect" id="2339">
    <property type="glycosylation" value="3 N-Linked glycans (3 sites)"/>
</dbReference>
<dbReference type="GlyCosmos" id="P17439">
    <property type="glycosylation" value="5 sites, 3 glycans"/>
</dbReference>
<dbReference type="GlyGen" id="P17439">
    <property type="glycosylation" value="5 sites, 4 N-linked glycans (3 sites)"/>
</dbReference>
<dbReference type="iPTMnet" id="P17439"/>
<dbReference type="PhosphoSitePlus" id="P17439"/>
<dbReference type="SwissPalm" id="P17439"/>
<dbReference type="jPOST" id="P17439"/>
<dbReference type="PaxDb" id="10090-ENSMUSP00000130660"/>
<dbReference type="PeptideAtlas" id="P17439"/>
<dbReference type="ProteomicsDB" id="268831"/>
<dbReference type="Pumba" id="P17439"/>
<dbReference type="Antibodypedia" id="1678">
    <property type="antibodies" value="504 antibodies from 33 providers"/>
</dbReference>
<dbReference type="DNASU" id="14466"/>
<dbReference type="Ensembl" id="ENSMUST00000077367.11">
    <property type="protein sequence ID" value="ENSMUSP00000076589.5"/>
    <property type="gene ID" value="ENSMUSG00000028048.12"/>
</dbReference>
<dbReference type="Ensembl" id="ENSMUST00000167998.2">
    <property type="protein sequence ID" value="ENSMUSP00000130660.2"/>
    <property type="gene ID" value="ENSMUSG00000028048.12"/>
</dbReference>
<dbReference type="GeneID" id="14466"/>
<dbReference type="KEGG" id="mmu:14466"/>
<dbReference type="UCSC" id="uc008pyb.2">
    <property type="organism name" value="mouse"/>
</dbReference>
<dbReference type="AGR" id="MGI:95665"/>
<dbReference type="CTD" id="2629"/>
<dbReference type="MGI" id="MGI:95665">
    <property type="gene designation" value="Gba1"/>
</dbReference>
<dbReference type="VEuPathDB" id="HostDB:ENSMUSG00000028048"/>
<dbReference type="eggNOG" id="KOG2566">
    <property type="taxonomic scope" value="Eukaryota"/>
</dbReference>
<dbReference type="GeneTree" id="ENSGT00390000009464"/>
<dbReference type="HOGENOM" id="CLU_014379_1_2_1"/>
<dbReference type="InParanoid" id="P17439"/>
<dbReference type="OMA" id="FGGIAWH"/>
<dbReference type="OrthoDB" id="2160638at2759"/>
<dbReference type="PhylomeDB" id="P17439"/>
<dbReference type="TreeFam" id="TF314254"/>
<dbReference type="BRENDA" id="3.2.1.45">
    <property type="organism ID" value="3474"/>
</dbReference>
<dbReference type="Reactome" id="R-MMU-9840310">
    <property type="pathway name" value="Glycosphingolipid catabolism"/>
</dbReference>
<dbReference type="UniPathway" id="UPA00296"/>
<dbReference type="BioGRID-ORCS" id="14466">
    <property type="hits" value="6 hits in 80 CRISPR screens"/>
</dbReference>
<dbReference type="ChiTaRS" id="Gba">
    <property type="organism name" value="mouse"/>
</dbReference>
<dbReference type="PRO" id="PR:P17439"/>
<dbReference type="Proteomes" id="UP000000589">
    <property type="component" value="Chromosome 3"/>
</dbReference>
<dbReference type="RNAct" id="P17439">
    <property type="molecule type" value="protein"/>
</dbReference>
<dbReference type="Bgee" id="ENSMUSG00000028048">
    <property type="expression patterns" value="Expressed in esophagus and 289 other cell types or tissues"/>
</dbReference>
<dbReference type="ExpressionAtlas" id="P17439">
    <property type="expression patterns" value="baseline and differential"/>
</dbReference>
<dbReference type="GO" id="GO:0005783">
    <property type="term" value="C:endoplasmic reticulum"/>
    <property type="evidence" value="ECO:0000314"/>
    <property type="project" value="UniProtKB"/>
</dbReference>
<dbReference type="GO" id="GO:0005615">
    <property type="term" value="C:extracellular space"/>
    <property type="evidence" value="ECO:0000314"/>
    <property type="project" value="MGI"/>
</dbReference>
<dbReference type="GO" id="GO:0005794">
    <property type="term" value="C:Golgi apparatus"/>
    <property type="evidence" value="ECO:0000314"/>
    <property type="project" value="UniProtKB"/>
</dbReference>
<dbReference type="GO" id="GO:0043202">
    <property type="term" value="C:lysosomal lumen"/>
    <property type="evidence" value="ECO:0000314"/>
    <property type="project" value="BHF-UCL"/>
</dbReference>
<dbReference type="GO" id="GO:0005765">
    <property type="term" value="C:lysosomal membrane"/>
    <property type="evidence" value="ECO:0000314"/>
    <property type="project" value="BHF-UCL"/>
</dbReference>
<dbReference type="GO" id="GO:0005764">
    <property type="term" value="C:lysosome"/>
    <property type="evidence" value="ECO:0000314"/>
    <property type="project" value="UniProtKB"/>
</dbReference>
<dbReference type="GO" id="GO:0005802">
    <property type="term" value="C:trans-Golgi network"/>
    <property type="evidence" value="ECO:0000314"/>
    <property type="project" value="UniProtKB"/>
</dbReference>
<dbReference type="GO" id="GO:0008422">
    <property type="term" value="F:beta-glucosidase activity"/>
    <property type="evidence" value="ECO:0000314"/>
    <property type="project" value="MGI"/>
</dbReference>
<dbReference type="GO" id="GO:0004336">
    <property type="term" value="F:galactosylceramidase activity"/>
    <property type="evidence" value="ECO:0007669"/>
    <property type="project" value="RHEA"/>
</dbReference>
<dbReference type="GO" id="GO:0004348">
    <property type="term" value="F:glucosylceramidase activity"/>
    <property type="evidence" value="ECO:0000314"/>
    <property type="project" value="UniProtKB"/>
</dbReference>
<dbReference type="GO" id="GO:0046527">
    <property type="term" value="F:glucosyltransferase activity"/>
    <property type="evidence" value="ECO:0000314"/>
    <property type="project" value="UniProtKB"/>
</dbReference>
<dbReference type="GO" id="GO:0016787">
    <property type="term" value="F:hydrolase activity"/>
    <property type="evidence" value="ECO:0000314"/>
    <property type="project" value="MGI"/>
</dbReference>
<dbReference type="GO" id="GO:0005124">
    <property type="term" value="F:scavenger receptor binding"/>
    <property type="evidence" value="ECO:0007669"/>
    <property type="project" value="Ensembl"/>
</dbReference>
<dbReference type="GO" id="GO:0005102">
    <property type="term" value="F:signaling receptor binding"/>
    <property type="evidence" value="ECO:0000353"/>
    <property type="project" value="BHF-UCL"/>
</dbReference>
<dbReference type="GO" id="GO:0050295">
    <property type="term" value="F:steryl-beta-glucosidase activity"/>
    <property type="evidence" value="ECO:0000250"/>
    <property type="project" value="UniProtKB"/>
</dbReference>
<dbReference type="GO" id="GO:0019882">
    <property type="term" value="P:antigen processing and presentation"/>
    <property type="evidence" value="ECO:0000315"/>
    <property type="project" value="MGI"/>
</dbReference>
<dbReference type="GO" id="GO:1905037">
    <property type="term" value="P:autophagosome organization"/>
    <property type="evidence" value="ECO:0000315"/>
    <property type="project" value="ARUK-UCL"/>
</dbReference>
<dbReference type="GO" id="GO:0006914">
    <property type="term" value="P:autophagy"/>
    <property type="evidence" value="ECO:0000315"/>
    <property type="project" value="UniProtKB"/>
</dbReference>
<dbReference type="GO" id="GO:1901805">
    <property type="term" value="P:beta-glucoside catabolic process"/>
    <property type="evidence" value="ECO:0007669"/>
    <property type="project" value="Ensembl"/>
</dbReference>
<dbReference type="GO" id="GO:0048854">
    <property type="term" value="P:brain morphogenesis"/>
    <property type="evidence" value="ECO:0000315"/>
    <property type="project" value="MGI"/>
</dbReference>
<dbReference type="GO" id="GO:0048469">
    <property type="term" value="P:cell maturation"/>
    <property type="evidence" value="ECO:0000315"/>
    <property type="project" value="MGI"/>
</dbReference>
<dbReference type="GO" id="GO:0009267">
    <property type="term" value="P:cellular response to starvation"/>
    <property type="evidence" value="ECO:0000315"/>
    <property type="project" value="ParkinsonsUK-UCL"/>
</dbReference>
<dbReference type="GO" id="GO:0071356">
    <property type="term" value="P:cellular response to tumor necrosis factor"/>
    <property type="evidence" value="ECO:0007669"/>
    <property type="project" value="Ensembl"/>
</dbReference>
<dbReference type="GO" id="GO:0007417">
    <property type="term" value="P:central nervous system development"/>
    <property type="evidence" value="ECO:0000315"/>
    <property type="project" value="MGI"/>
</dbReference>
<dbReference type="GO" id="GO:0046513">
    <property type="term" value="P:ceramide biosynthetic process"/>
    <property type="evidence" value="ECO:0007669"/>
    <property type="project" value="Ensembl"/>
</dbReference>
<dbReference type="GO" id="GO:0021694">
    <property type="term" value="P:cerebellar Purkinje cell layer formation"/>
    <property type="evidence" value="ECO:0000315"/>
    <property type="project" value="MGI"/>
</dbReference>
<dbReference type="GO" id="GO:0008203">
    <property type="term" value="P:cholesterol metabolic process"/>
    <property type="evidence" value="ECO:0000314"/>
    <property type="project" value="UniProtKB"/>
</dbReference>
<dbReference type="GO" id="GO:0008340">
    <property type="term" value="P:determination of adult lifespan"/>
    <property type="evidence" value="ECO:0000315"/>
    <property type="project" value="MGI"/>
</dbReference>
<dbReference type="GO" id="GO:0061436">
    <property type="term" value="P:establishment of skin barrier"/>
    <property type="evidence" value="ECO:0007669"/>
    <property type="project" value="Ensembl"/>
</dbReference>
<dbReference type="GO" id="GO:0006680">
    <property type="term" value="P:glucosylceramide catabolic process"/>
    <property type="evidence" value="ECO:0000314"/>
    <property type="project" value="UniProtKB"/>
</dbReference>
<dbReference type="GO" id="GO:0006678">
    <property type="term" value="P:glucosylceramide metabolic process"/>
    <property type="evidence" value="ECO:0000315"/>
    <property type="project" value="MGI"/>
</dbReference>
<dbReference type="GO" id="GO:0071425">
    <property type="term" value="P:hematopoietic stem cell proliferation"/>
    <property type="evidence" value="ECO:0000315"/>
    <property type="project" value="MGI"/>
</dbReference>
<dbReference type="GO" id="GO:0048872">
    <property type="term" value="P:homeostasis of number of cells"/>
    <property type="evidence" value="ECO:0000315"/>
    <property type="project" value="MGI"/>
</dbReference>
<dbReference type="GO" id="GO:0030259">
    <property type="term" value="P:lipid glycosylation"/>
    <property type="evidence" value="ECO:0000314"/>
    <property type="project" value="UniProtKB"/>
</dbReference>
<dbReference type="GO" id="GO:0019915">
    <property type="term" value="P:lipid storage"/>
    <property type="evidence" value="ECO:0000315"/>
    <property type="project" value="MGI"/>
</dbReference>
<dbReference type="GO" id="GO:0072676">
    <property type="term" value="P:lymphocyte migration"/>
    <property type="evidence" value="ECO:0000315"/>
    <property type="project" value="MGI"/>
</dbReference>
<dbReference type="GO" id="GO:1905146">
    <property type="term" value="P:lysosomal protein catabolic process"/>
    <property type="evidence" value="ECO:0007669"/>
    <property type="project" value="Ensembl"/>
</dbReference>
<dbReference type="GO" id="GO:0007040">
    <property type="term" value="P:lysosome organization"/>
    <property type="evidence" value="ECO:0000315"/>
    <property type="project" value="UniProtKB"/>
</dbReference>
<dbReference type="GO" id="GO:0014004">
    <property type="term" value="P:microglia differentiation"/>
    <property type="evidence" value="ECO:0000315"/>
    <property type="project" value="MGI"/>
</dbReference>
<dbReference type="GO" id="GO:0061518">
    <property type="term" value="P:microglial cell proliferation"/>
    <property type="evidence" value="ECO:0000315"/>
    <property type="project" value="MGI"/>
</dbReference>
<dbReference type="GO" id="GO:0007005">
    <property type="term" value="P:mitochondrion organization"/>
    <property type="evidence" value="ECO:0000315"/>
    <property type="project" value="MGI"/>
</dbReference>
<dbReference type="GO" id="GO:0000423">
    <property type="term" value="P:mitophagy"/>
    <property type="evidence" value="ECO:0000315"/>
    <property type="project" value="MGI"/>
</dbReference>
<dbReference type="GO" id="GO:0061744">
    <property type="term" value="P:motor behavior"/>
    <property type="evidence" value="ECO:0000315"/>
    <property type="project" value="MGI"/>
</dbReference>
<dbReference type="GO" id="GO:0050728">
    <property type="term" value="P:negative regulation of inflammatory response"/>
    <property type="evidence" value="ECO:0007669"/>
    <property type="project" value="Ensembl"/>
</dbReference>
<dbReference type="GO" id="GO:0032715">
    <property type="term" value="P:negative regulation of interleukin-6 production"/>
    <property type="evidence" value="ECO:0007669"/>
    <property type="project" value="Ensembl"/>
</dbReference>
<dbReference type="GO" id="GO:0043409">
    <property type="term" value="P:negative regulation of MAPK cascade"/>
    <property type="evidence" value="ECO:0007669"/>
    <property type="project" value="Ensembl"/>
</dbReference>
<dbReference type="GO" id="GO:0043524">
    <property type="term" value="P:negative regulation of neuron apoptotic process"/>
    <property type="evidence" value="ECO:0000315"/>
    <property type="project" value="MGI"/>
</dbReference>
<dbReference type="GO" id="GO:0051248">
    <property type="term" value="P:negative regulation of protein metabolic process"/>
    <property type="evidence" value="ECO:0000315"/>
    <property type="project" value="ParkinsonsUK-UCL"/>
</dbReference>
<dbReference type="GO" id="GO:0031333">
    <property type="term" value="P:negative regulation of protein-containing complex assembly"/>
    <property type="evidence" value="ECO:0000315"/>
    <property type="project" value="ParkinsonsUK-UCL"/>
</dbReference>
<dbReference type="GO" id="GO:0050877">
    <property type="term" value="P:nervous system process"/>
    <property type="evidence" value="ECO:0000315"/>
    <property type="project" value="MGI"/>
</dbReference>
<dbReference type="GO" id="GO:0050905">
    <property type="term" value="P:neuromuscular process"/>
    <property type="evidence" value="ECO:0000315"/>
    <property type="project" value="MGI"/>
</dbReference>
<dbReference type="GO" id="GO:0051402">
    <property type="term" value="P:neuron apoptotic process"/>
    <property type="evidence" value="ECO:0000315"/>
    <property type="project" value="MGI"/>
</dbReference>
<dbReference type="GO" id="GO:1904457">
    <property type="term" value="P:positive regulation of neuronal action potential"/>
    <property type="evidence" value="ECO:0007669"/>
    <property type="project" value="Ensembl"/>
</dbReference>
<dbReference type="GO" id="GO:0032436">
    <property type="term" value="P:positive regulation of proteasomal ubiquitin-dependent protein catabolic process"/>
    <property type="evidence" value="ECO:0000315"/>
    <property type="project" value="ParkinsonsUK-UCL"/>
</dbReference>
<dbReference type="GO" id="GO:1903052">
    <property type="term" value="P:positive regulation of proteolysis involved in protein catabolic process"/>
    <property type="evidence" value="ECO:0000315"/>
    <property type="project" value="ARUK-UCL"/>
</dbReference>
<dbReference type="GO" id="GO:1905091">
    <property type="term" value="P:positive regulation of type 2 mitophagy"/>
    <property type="evidence" value="ECO:0000315"/>
    <property type="project" value="ARUK-UCL"/>
</dbReference>
<dbReference type="GO" id="GO:0043161">
    <property type="term" value="P:proteasome-mediated ubiquitin-dependent protein catabolic process"/>
    <property type="evidence" value="ECO:0000315"/>
    <property type="project" value="MGI"/>
</dbReference>
<dbReference type="GO" id="GO:0021859">
    <property type="term" value="P:pyramidal neuron differentiation"/>
    <property type="evidence" value="ECO:0000315"/>
    <property type="project" value="MGI"/>
</dbReference>
<dbReference type="GO" id="GO:0042391">
    <property type="term" value="P:regulation of membrane potential"/>
    <property type="evidence" value="ECO:0000315"/>
    <property type="project" value="MGI"/>
</dbReference>
<dbReference type="GO" id="GO:0051246">
    <property type="term" value="P:regulation of protein metabolic process"/>
    <property type="evidence" value="ECO:0000315"/>
    <property type="project" value="ARUK-UCL"/>
</dbReference>
<dbReference type="GO" id="GO:0032006">
    <property type="term" value="P:regulation of TOR signaling"/>
    <property type="evidence" value="ECO:0000315"/>
    <property type="project" value="UniProtKB"/>
</dbReference>
<dbReference type="GO" id="GO:0022904">
    <property type="term" value="P:respiratory electron transport chain"/>
    <property type="evidence" value="ECO:0000315"/>
    <property type="project" value="MGI"/>
</dbReference>
<dbReference type="GO" id="GO:0071548">
    <property type="term" value="P:response to dexamethasone"/>
    <property type="evidence" value="ECO:0007669"/>
    <property type="project" value="Ensembl"/>
</dbReference>
<dbReference type="GO" id="GO:0043627">
    <property type="term" value="P:response to estrogen"/>
    <property type="evidence" value="ECO:0007669"/>
    <property type="project" value="Ensembl"/>
</dbReference>
<dbReference type="GO" id="GO:0009268">
    <property type="term" value="P:response to pH"/>
    <property type="evidence" value="ECO:0007669"/>
    <property type="project" value="Ensembl"/>
</dbReference>
<dbReference type="GO" id="GO:0033574">
    <property type="term" value="P:response to testosterone"/>
    <property type="evidence" value="ECO:0007669"/>
    <property type="project" value="Ensembl"/>
</dbReference>
<dbReference type="GO" id="GO:0097066">
    <property type="term" value="P:response to thyroid hormone"/>
    <property type="evidence" value="ECO:0007669"/>
    <property type="project" value="Ensembl"/>
</dbReference>
<dbReference type="GO" id="GO:0046512">
    <property type="term" value="P:sphingosine biosynthetic process"/>
    <property type="evidence" value="ECO:0007669"/>
    <property type="project" value="Ensembl"/>
</dbReference>
<dbReference type="GO" id="GO:0033077">
    <property type="term" value="P:T cell differentiation in thymus"/>
    <property type="evidence" value="ECO:0000315"/>
    <property type="project" value="MGI"/>
</dbReference>
<dbReference type="GO" id="GO:0023021">
    <property type="term" value="P:termination of signal transduction"/>
    <property type="evidence" value="ECO:0007669"/>
    <property type="project" value="Ensembl"/>
</dbReference>
<dbReference type="FunFam" id="3.20.20.80:FF:000030">
    <property type="entry name" value="Lysosomal acid glucosylceramidase"/>
    <property type="match status" value="1"/>
</dbReference>
<dbReference type="Gene3D" id="3.20.20.80">
    <property type="entry name" value="Glycosidases"/>
    <property type="match status" value="1"/>
</dbReference>
<dbReference type="InterPro" id="IPR033452">
    <property type="entry name" value="GH30_C"/>
</dbReference>
<dbReference type="InterPro" id="IPR001139">
    <property type="entry name" value="Glyco_hydro_30"/>
</dbReference>
<dbReference type="InterPro" id="IPR033453">
    <property type="entry name" value="Glyco_hydro_30_TIM-barrel"/>
</dbReference>
<dbReference type="InterPro" id="IPR017853">
    <property type="entry name" value="Glycoside_hydrolase_SF"/>
</dbReference>
<dbReference type="PANTHER" id="PTHR11069">
    <property type="entry name" value="GLUCOSYLCERAMIDASE"/>
    <property type="match status" value="1"/>
</dbReference>
<dbReference type="PANTHER" id="PTHR11069:SF23">
    <property type="entry name" value="LYSOSOMAL ACID GLUCOSYLCERAMIDASE"/>
    <property type="match status" value="1"/>
</dbReference>
<dbReference type="Pfam" id="PF02055">
    <property type="entry name" value="Glyco_hydro_30"/>
    <property type="match status" value="1"/>
</dbReference>
<dbReference type="Pfam" id="PF17189">
    <property type="entry name" value="Glyco_hydro_30C"/>
    <property type="match status" value="1"/>
</dbReference>
<dbReference type="PRINTS" id="PR00843">
    <property type="entry name" value="GLHYDRLASE30"/>
</dbReference>
<dbReference type="SUPFAM" id="SSF51445">
    <property type="entry name" value="(Trans)glycosidases"/>
    <property type="match status" value="1"/>
</dbReference>
<dbReference type="SUPFAM" id="SSF51011">
    <property type="entry name" value="Glycosyl hydrolase domain"/>
    <property type="match status" value="2"/>
</dbReference>
<name>GBA1_MOUSE</name>
<proteinExistence type="evidence at protein level"/>
<comment type="function">
    <text evidence="2 8 9">Glucosylceramidase that catalyzes, within the lysosomal compartment, the hydrolysis of glucosylceramides/GlcCers (such as beta-D-glucosyl-(1&lt;-&gt;1')-N-acylsphing-4-enine) into free ceramides (such as N-acylsphing-4-enine) and glucose (PubMed:24211208). Plays a central role in the degradation of complex lipids and the turnover of cellular membranes (PubMed:27378698). Through the production of ceramides, participates in the PKC-activated salvage pathway of ceramide formation (By similarity). Catalyzes the glucosylation of cholesterol, through a transglucosylation reaction where glucose is transferred from GlcCer to cholesterol (PubMed:24211208). GlcCer containing mono-unsaturated fatty acids (such as beta-D-glucosyl-N-(9Z-octadecenoyl)-sphing-4-enine) are preferred as glucose donors for cholesterol glucosylation when compared with GlcCer containing same chain length of saturated fatty acids (such as beta-D-glucosyl-N-octadecanoyl-sphing-4-enine) (By similarity). Under specific conditions, may alternatively catalyze the reverse reaction, transferring glucose from cholesteryl 3-beta-D-glucoside to ceramide (By similarity). Can also hydrolyze cholesteryl 3-beta-D-glucoside producing glucose and cholesterol (By similarity). Catalyzes the hydrolysis of galactosylceramides/GalCers (such as beta-D-galactosyl-(1&lt;-&gt;1')-N-acylsphing-4-enine), as well as the transfer of galactose between GalCers and cholesterol in vitro, but with lower activity than with GlcCers (By similarity). Contrary to GlcCer and GalCer, xylosylceramide/XylCer (such as beta-D-xyosyl-(1&lt;-&gt;1')-N-acylsphing-4-enine) is not a good substrate for hydrolysis, however it is a good xylose donor for transxylosylation activity to form cholesteryl 3-beta-D-xyloside (By similarity).</text>
</comment>
<comment type="catalytic activity">
    <reaction evidence="8">
        <text>a beta-D-glucosyl-(1&lt;-&gt;1')-N-acylsphing-4-enine + H2O = an N-acylsphing-4-enine + D-glucose</text>
        <dbReference type="Rhea" id="RHEA:13269"/>
        <dbReference type="ChEBI" id="CHEBI:4167"/>
        <dbReference type="ChEBI" id="CHEBI:15377"/>
        <dbReference type="ChEBI" id="CHEBI:22801"/>
        <dbReference type="ChEBI" id="CHEBI:52639"/>
        <dbReference type="EC" id="3.2.1.45"/>
    </reaction>
    <physiologicalReaction direction="left-to-right" evidence="13">
        <dbReference type="Rhea" id="RHEA:13270"/>
    </physiologicalReaction>
</comment>
<comment type="catalytic activity">
    <reaction evidence="2">
        <text>a beta-D-galactosyl-(1&lt;-&gt;1')-N-acylsphing-4-enine + H2O = an N-acylsphing-4-enine + D-galactose</text>
        <dbReference type="Rhea" id="RHEA:14297"/>
        <dbReference type="ChEBI" id="CHEBI:4139"/>
        <dbReference type="ChEBI" id="CHEBI:15377"/>
        <dbReference type="ChEBI" id="CHEBI:18390"/>
        <dbReference type="ChEBI" id="CHEBI:52639"/>
        <dbReference type="EC" id="3.2.1.46"/>
    </reaction>
    <physiologicalReaction direction="left-to-right" evidence="2">
        <dbReference type="Rhea" id="RHEA:14298"/>
    </physiologicalReaction>
</comment>
<comment type="catalytic activity">
    <reaction evidence="8">
        <text>cholesteryl 3-beta-D-glucoside + H2O = cholesterol + D-glucose</text>
        <dbReference type="Rhea" id="RHEA:11956"/>
        <dbReference type="ChEBI" id="CHEBI:4167"/>
        <dbReference type="ChEBI" id="CHEBI:15377"/>
        <dbReference type="ChEBI" id="CHEBI:16113"/>
        <dbReference type="ChEBI" id="CHEBI:17495"/>
    </reaction>
    <physiologicalReaction direction="left-to-right" evidence="13">
        <dbReference type="Rhea" id="RHEA:11957"/>
    </physiologicalReaction>
</comment>
<comment type="catalytic activity">
    <reaction evidence="8">
        <text>a beta-D-glucosyl-(1&lt;-&gt;1')-N-acylsphing-4-enine + cholesterol = cholesteryl 3-beta-D-glucoside + an N-acylsphing-4-enine</text>
        <dbReference type="Rhea" id="RHEA:58264"/>
        <dbReference type="ChEBI" id="CHEBI:16113"/>
        <dbReference type="ChEBI" id="CHEBI:17495"/>
        <dbReference type="ChEBI" id="CHEBI:22801"/>
        <dbReference type="ChEBI" id="CHEBI:52639"/>
    </reaction>
    <physiologicalReaction direction="left-to-right" evidence="13">
        <dbReference type="Rhea" id="RHEA:58265"/>
    </physiologicalReaction>
    <physiologicalReaction direction="right-to-left" evidence="12">
        <dbReference type="Rhea" id="RHEA:58266"/>
    </physiologicalReaction>
</comment>
<comment type="catalytic activity">
    <reaction evidence="8">
        <text>beta-D-glucosyl-(1&lt;-&gt;1')-N-hexadecanoylsphing-4-enine + cholesterol = cholesteryl 3-beta-D-glucoside + N-hexadecanoylsphing-4-enine</text>
        <dbReference type="Rhea" id="RHEA:58316"/>
        <dbReference type="ChEBI" id="CHEBI:16113"/>
        <dbReference type="ChEBI" id="CHEBI:17495"/>
        <dbReference type="ChEBI" id="CHEBI:72959"/>
        <dbReference type="ChEBI" id="CHEBI:84716"/>
    </reaction>
    <physiologicalReaction direction="left-to-right" evidence="13">
        <dbReference type="Rhea" id="RHEA:58317"/>
    </physiologicalReaction>
    <physiologicalReaction direction="right-to-left" evidence="12">
        <dbReference type="Rhea" id="RHEA:58318"/>
    </physiologicalReaction>
</comment>
<comment type="catalytic activity">
    <reaction evidence="2">
        <text>beta-D-glucosyl-N-(9Z-octadecenoyl)-sphing-4E-enine + cholesterol = N-(9Z-octadecenoyl)-sphing-4-enine + cholesteryl 3-beta-D-glucoside</text>
        <dbReference type="Rhea" id="RHEA:58324"/>
        <dbReference type="ChEBI" id="CHEBI:16113"/>
        <dbReference type="ChEBI" id="CHEBI:17495"/>
        <dbReference type="ChEBI" id="CHEBI:77996"/>
        <dbReference type="ChEBI" id="CHEBI:139140"/>
    </reaction>
    <physiologicalReaction direction="left-to-right" evidence="2">
        <dbReference type="Rhea" id="RHEA:58325"/>
    </physiologicalReaction>
    <physiologicalReaction direction="right-to-left" evidence="2">
        <dbReference type="Rhea" id="RHEA:58326"/>
    </physiologicalReaction>
</comment>
<comment type="catalytic activity">
    <reaction evidence="2">
        <text>beta-D-glucosyl-N-octanoylsphing-4E-enine + cholesterol = N-octanoylsphing-4-enine + cholesteryl 3-beta-D-glucoside</text>
        <dbReference type="Rhea" id="RHEA:70303"/>
        <dbReference type="ChEBI" id="CHEBI:16113"/>
        <dbReference type="ChEBI" id="CHEBI:17495"/>
        <dbReference type="ChEBI" id="CHEBI:45815"/>
        <dbReference type="ChEBI" id="CHEBI:65222"/>
    </reaction>
    <physiologicalReaction direction="left-to-right" evidence="2">
        <dbReference type="Rhea" id="RHEA:70304"/>
    </physiologicalReaction>
    <physiologicalReaction direction="right-to-left" evidence="2">
        <dbReference type="Rhea" id="RHEA:70305"/>
    </physiologicalReaction>
</comment>
<comment type="catalytic activity">
    <reaction evidence="2">
        <text>beta-D-glucosyl-N-dodecanoylsphing-4-enine + cholesterol = N-dodecanoylsphing-4-enine + cholesteryl 3-beta-D-glucoside</text>
        <dbReference type="Rhea" id="RHEA:70307"/>
        <dbReference type="ChEBI" id="CHEBI:16113"/>
        <dbReference type="ChEBI" id="CHEBI:17495"/>
        <dbReference type="ChEBI" id="CHEBI:72956"/>
        <dbReference type="ChEBI" id="CHEBI:76297"/>
    </reaction>
    <physiologicalReaction direction="left-to-right" evidence="2">
        <dbReference type="Rhea" id="RHEA:70308"/>
    </physiologicalReaction>
    <physiologicalReaction direction="right-to-left" evidence="2">
        <dbReference type="Rhea" id="RHEA:70309"/>
    </physiologicalReaction>
</comment>
<comment type="catalytic activity">
    <reaction evidence="2">
        <text>beta-D-glucosyl-(1&lt;-&gt;1)-N-octadecanoylsphing-4-enine + cholesterol = N-octadecanoylsphing-4-enine + cholesteryl 3-beta-D-glucoside</text>
        <dbReference type="Rhea" id="RHEA:70311"/>
        <dbReference type="ChEBI" id="CHEBI:16113"/>
        <dbReference type="ChEBI" id="CHEBI:17495"/>
        <dbReference type="ChEBI" id="CHEBI:72961"/>
        <dbReference type="ChEBI" id="CHEBI:84719"/>
    </reaction>
    <physiologicalReaction direction="left-to-right" evidence="2">
        <dbReference type="Rhea" id="RHEA:70312"/>
    </physiologicalReaction>
    <physiologicalReaction direction="right-to-left" evidence="2">
        <dbReference type="Rhea" id="RHEA:70313"/>
    </physiologicalReaction>
</comment>
<comment type="catalytic activity">
    <reaction evidence="2">
        <text>beta-D-glucosyl-(1&lt;-&gt;1')-N-(15Z-tetracosenoyl)-sphing-4-enine + cholesterol = N-(15Z-tetracosenoyl)-sphing-4-enine + cholesteryl 3-beta-D-glucoside</text>
        <dbReference type="Rhea" id="RHEA:70315"/>
        <dbReference type="ChEBI" id="CHEBI:16113"/>
        <dbReference type="ChEBI" id="CHEBI:17495"/>
        <dbReference type="ChEBI" id="CHEBI:74450"/>
        <dbReference type="ChEBI" id="CHEBI:76302"/>
    </reaction>
    <physiologicalReaction direction="left-to-right" evidence="2">
        <dbReference type="Rhea" id="RHEA:70316"/>
    </physiologicalReaction>
    <physiologicalReaction direction="right-to-left" evidence="2">
        <dbReference type="Rhea" id="RHEA:70317"/>
    </physiologicalReaction>
</comment>
<comment type="catalytic activity">
    <reaction evidence="2">
        <text>a beta-D-galactosyl-(1&lt;-&gt;1')-N-acylsphing-4-enine + cholesterol = cholesteryl 3-beta-D-galactoside + an N-acylsphing-4-enine</text>
        <dbReference type="Rhea" id="RHEA:70235"/>
        <dbReference type="ChEBI" id="CHEBI:16113"/>
        <dbReference type="ChEBI" id="CHEBI:18390"/>
        <dbReference type="ChEBI" id="CHEBI:52639"/>
        <dbReference type="ChEBI" id="CHEBI:189066"/>
    </reaction>
    <physiologicalReaction direction="left-to-right" evidence="2">
        <dbReference type="Rhea" id="RHEA:70236"/>
    </physiologicalReaction>
    <physiologicalReaction direction="right-to-left" evidence="2">
        <dbReference type="Rhea" id="RHEA:70237"/>
    </physiologicalReaction>
</comment>
<comment type="catalytic activity">
    <reaction evidence="2">
        <text>1-(beta-D-galactosyl)-N-dodecanoylsphing-4-enine + cholesterol = cholesteryl 3-beta-D-galactoside + N-dodecanoylsphing-4-enine</text>
        <dbReference type="Rhea" id="RHEA:70255"/>
        <dbReference type="ChEBI" id="CHEBI:16113"/>
        <dbReference type="ChEBI" id="CHEBI:72956"/>
        <dbReference type="ChEBI" id="CHEBI:73432"/>
        <dbReference type="ChEBI" id="CHEBI:189066"/>
    </reaction>
    <physiologicalReaction direction="left-to-right" evidence="2">
        <dbReference type="Rhea" id="RHEA:70256"/>
    </physiologicalReaction>
    <physiologicalReaction direction="right-to-left" evidence="2">
        <dbReference type="Rhea" id="RHEA:70257"/>
    </physiologicalReaction>
</comment>
<comment type="catalytic activity">
    <reaction evidence="2">
        <text>a beta-D-xylosyl-(1&lt;-&gt;1')-N-acylsphing-4-enine + cholesterol = cholesteryl 3-beta-D-xyloside + an N-acylsphing-4-enine</text>
        <dbReference type="Rhea" id="RHEA:70239"/>
        <dbReference type="ChEBI" id="CHEBI:16113"/>
        <dbReference type="ChEBI" id="CHEBI:52639"/>
        <dbReference type="ChEBI" id="CHEBI:189067"/>
        <dbReference type="ChEBI" id="CHEBI:189068"/>
    </reaction>
    <physiologicalReaction direction="left-to-right" evidence="2">
        <dbReference type="Rhea" id="RHEA:70240"/>
    </physiologicalReaction>
</comment>
<comment type="catalytic activity">
    <reaction evidence="2">
        <text>beta-D-xylosyl-(1&lt;-&gt;1')-N-(9Z-octadecenoyl)-sphing-4-enine + cholesterol = cholesteryl 3-beta-D-xyloside + N-(9Z-octadecenoyl)-sphing-4-enine</text>
        <dbReference type="Rhea" id="RHEA:70251"/>
        <dbReference type="ChEBI" id="CHEBI:16113"/>
        <dbReference type="ChEBI" id="CHEBI:77996"/>
        <dbReference type="ChEBI" id="CHEBI:189067"/>
        <dbReference type="ChEBI" id="CHEBI:189081"/>
    </reaction>
    <physiologicalReaction direction="left-to-right" evidence="2">
        <dbReference type="Rhea" id="RHEA:70252"/>
    </physiologicalReaction>
</comment>
<comment type="activity regulation">
    <text evidence="8">Inhibited by conduritol B epoxide/CBE.</text>
</comment>
<comment type="pathway">
    <text evidence="8">Steroid metabolism; cholesterol metabolism.</text>
</comment>
<comment type="pathway">
    <text evidence="8">Sphingolipid metabolism.</text>
</comment>
<comment type="subunit">
    <text evidence="2 10">Interacts with saposin-C. Interacts with SCARB2. Interacts with TCP1 (By similarity). Interacts with GRN; this interaction prevents aggregation of GBA1-SCARB2 complex via interaction with HSPA1A upon stress (PubMed:27789271).</text>
</comment>
<comment type="subcellular location">
    <subcellularLocation>
        <location evidence="2">Lysosome membrane</location>
        <topology evidence="2">Peripheral membrane protein</topology>
        <orientation evidence="2">Lumenal side</orientation>
    </subcellularLocation>
    <text evidence="2">Interaction with saposin-C promotes membrane [?]association. Targeting to lysosomes occurs through an alternative MPR-independent mechanism via SCARB2.</text>
</comment>
<comment type="disruption phenotype">
    <text evidence="4 7">Homozygous knockout mice die within 24 hours of birth (PubMed:1594045). They are under weight, respire abnormally and show rapidly progressing cyanosis (PubMed:1594045). Feeding and movement are also decreased in these mice (PubMed:1594045). Macrophages accumulating glucosylceramides in tubular lysosomal deposits are found in liver (in Kupffer cells), bone marrow, spleen and brain (PubMed:1594045). Hematopoietic stem cells conditional knockout of GBA1, leads to widespread and organ-specific dysfunction of immune cells. Thymus shows the earliest alteration with features of impaired T-cell maturation, aberrant B-cell recruitment, enhanced antigen presentation, and impaired egress of mature thymocytes (PubMed:22665763).</text>
</comment>
<comment type="similarity">
    <text evidence="12">Belongs to the glycosyl hydrolase 30 family.</text>
</comment>
<evidence type="ECO:0000250" key="1"/>
<evidence type="ECO:0000250" key="2">
    <source>
        <dbReference type="UniProtKB" id="P04062"/>
    </source>
</evidence>
<evidence type="ECO:0000255" key="3"/>
<evidence type="ECO:0000269" key="4">
    <source>
    </source>
</evidence>
<evidence type="ECO:0000269" key="5">
    <source>
    </source>
</evidence>
<evidence type="ECO:0000269" key="6">
    <source>
    </source>
</evidence>
<evidence type="ECO:0000269" key="7">
    <source>
    </source>
</evidence>
<evidence type="ECO:0000269" key="8">
    <source>
    </source>
</evidence>
<evidence type="ECO:0000269" key="9">
    <source>
    </source>
</evidence>
<evidence type="ECO:0000269" key="10">
    <source>
    </source>
</evidence>
<evidence type="ECO:0000303" key="11">
    <source>
    </source>
</evidence>
<evidence type="ECO:0000305" key="12"/>
<evidence type="ECO:0000305" key="13">
    <source>
    </source>
</evidence>
<evidence type="ECO:0000312" key="14">
    <source>
        <dbReference type="MGI" id="MGI:95665"/>
    </source>
</evidence>